<proteinExistence type="inferred from homology"/>
<evidence type="ECO:0000255" key="1">
    <source>
        <dbReference type="HAMAP-Rule" id="MF_01508"/>
    </source>
</evidence>
<dbReference type="EMBL" id="CP001404">
    <property type="protein sequence ID" value="ACP48564.1"/>
    <property type="molecule type" value="Genomic_DNA"/>
</dbReference>
<dbReference type="RefSeq" id="WP_012717455.1">
    <property type="nucleotide sequence ID" value="NC_012623.1"/>
</dbReference>
<dbReference type="SMR" id="C3NHF4"/>
<dbReference type="GeneID" id="7811854"/>
<dbReference type="KEGG" id="sin:YN1551_1474"/>
<dbReference type="HOGENOM" id="CLU_027255_1_1_2"/>
<dbReference type="Proteomes" id="UP000006818">
    <property type="component" value="Chromosome"/>
</dbReference>
<dbReference type="GO" id="GO:0005524">
    <property type="term" value="F:ATP binding"/>
    <property type="evidence" value="ECO:0007669"/>
    <property type="project" value="UniProtKB-UniRule"/>
</dbReference>
<dbReference type="GO" id="GO:0016887">
    <property type="term" value="F:ATP hydrolysis activity"/>
    <property type="evidence" value="ECO:0007669"/>
    <property type="project" value="InterPro"/>
</dbReference>
<dbReference type="GO" id="GO:0003689">
    <property type="term" value="F:DNA clamp loader activity"/>
    <property type="evidence" value="ECO:0007669"/>
    <property type="project" value="UniProtKB-UniRule"/>
</dbReference>
<dbReference type="GO" id="GO:0006260">
    <property type="term" value="P:DNA replication"/>
    <property type="evidence" value="ECO:0007669"/>
    <property type="project" value="UniProtKB-UniRule"/>
</dbReference>
<dbReference type="CDD" id="cd00009">
    <property type="entry name" value="AAA"/>
    <property type="match status" value="1"/>
</dbReference>
<dbReference type="CDD" id="cd18140">
    <property type="entry name" value="HLD_clamp_RFC"/>
    <property type="match status" value="1"/>
</dbReference>
<dbReference type="Gene3D" id="1.10.8.60">
    <property type="match status" value="1"/>
</dbReference>
<dbReference type="Gene3D" id="3.40.50.300">
    <property type="entry name" value="P-loop containing nucleotide triphosphate hydrolases"/>
    <property type="match status" value="1"/>
</dbReference>
<dbReference type="HAMAP" id="MF_01508">
    <property type="entry name" value="RfcL"/>
    <property type="match status" value="1"/>
</dbReference>
<dbReference type="InterPro" id="IPR003593">
    <property type="entry name" value="AAA+_ATPase"/>
</dbReference>
<dbReference type="InterPro" id="IPR003959">
    <property type="entry name" value="ATPase_AAA_core"/>
</dbReference>
<dbReference type="InterPro" id="IPR027417">
    <property type="entry name" value="P-loop_NTPase"/>
</dbReference>
<dbReference type="InterPro" id="IPR023935">
    <property type="entry name" value="Rep_factor-C_lsu"/>
</dbReference>
<dbReference type="InterPro" id="IPR047854">
    <property type="entry name" value="RFC_lid"/>
</dbReference>
<dbReference type="NCBIfam" id="NF003226">
    <property type="entry name" value="PRK04195.1-1"/>
    <property type="match status" value="1"/>
</dbReference>
<dbReference type="NCBIfam" id="NF003229">
    <property type="entry name" value="PRK04195.1-5"/>
    <property type="match status" value="1"/>
</dbReference>
<dbReference type="PANTHER" id="PTHR23389">
    <property type="entry name" value="CHROMOSOME TRANSMISSION FIDELITY FACTOR 18"/>
    <property type="match status" value="1"/>
</dbReference>
<dbReference type="PANTHER" id="PTHR23389:SF6">
    <property type="entry name" value="REPLICATION FACTOR C SUBUNIT 1"/>
    <property type="match status" value="1"/>
</dbReference>
<dbReference type="Pfam" id="PF00004">
    <property type="entry name" value="AAA"/>
    <property type="match status" value="1"/>
</dbReference>
<dbReference type="Pfam" id="PF21960">
    <property type="entry name" value="RCF1-5-like_lid"/>
    <property type="match status" value="1"/>
</dbReference>
<dbReference type="SMART" id="SM00382">
    <property type="entry name" value="AAA"/>
    <property type="match status" value="1"/>
</dbReference>
<dbReference type="SUPFAM" id="SSF52540">
    <property type="entry name" value="P-loop containing nucleoside triphosphate hydrolases"/>
    <property type="match status" value="1"/>
</dbReference>
<reference key="1">
    <citation type="journal article" date="2009" name="Proc. Natl. Acad. Sci. U.S.A.">
        <title>Biogeography of the Sulfolobus islandicus pan-genome.</title>
        <authorList>
            <person name="Reno M.L."/>
            <person name="Held N.L."/>
            <person name="Fields C.J."/>
            <person name="Burke P.V."/>
            <person name="Whitaker R.J."/>
        </authorList>
    </citation>
    <scope>NUCLEOTIDE SEQUENCE [LARGE SCALE GENOMIC DNA]</scope>
    <source>
        <strain>Y.N.15.51 / Yellowstone #2</strain>
    </source>
</reference>
<feature type="chain" id="PRO_1000215343" description="Replication factor C large subunit">
    <location>
        <begin position="1"/>
        <end position="405"/>
    </location>
</feature>
<feature type="binding site" evidence="1">
    <location>
        <begin position="47"/>
        <end position="54"/>
    </location>
    <ligand>
        <name>ATP</name>
        <dbReference type="ChEBI" id="CHEBI:30616"/>
    </ligand>
</feature>
<comment type="function">
    <text evidence="1">Part of the RFC clamp loader complex which loads the PCNA sliding clamp onto DNA.</text>
</comment>
<comment type="subunit">
    <text evidence="1">Heteromultimer composed of small subunits (RfcS) and large subunits (RfcL).</text>
</comment>
<comment type="similarity">
    <text evidence="1">Belongs to the activator 1 small subunits family. RfcL subfamily.</text>
</comment>
<gene>
    <name evidence="1" type="primary">rfcL</name>
    <name type="ordered locus">YN1551_1474</name>
</gene>
<organism>
    <name type="scientific">Saccharolobus islandicus (strain Y.N.15.51 / Yellowstone #2)</name>
    <name type="common">Sulfolobus islandicus</name>
    <dbReference type="NCBI Taxonomy" id="419942"/>
    <lineage>
        <taxon>Archaea</taxon>
        <taxon>Thermoproteota</taxon>
        <taxon>Thermoprotei</taxon>
        <taxon>Sulfolobales</taxon>
        <taxon>Sulfolobaceae</taxon>
        <taxon>Saccharolobus</taxon>
    </lineage>
</organism>
<sequence>MIQWFLKYRPRSLKDVENQDGAKKELQEWIESWLNGKPNAKAVLLHGPPGVGKTTLAEAVAHDYNLELLEMNASDSRKLQDIKGVAEKASVYGSIFGTRGKLILLDEVDGINVREDTGAIQGILELIEKTKYPIIMTANDPWNPALRELRNKTKMVGLNKLGKYPLRRLLKKICQAEKIICDDEALNYIIDTSEGDTRYAINMLQGIGEGYGKVTLDLVEAMARRKERELDPFETLRDIFWARYAWQAKNAATSAQIDYDMLIRWISENIPIQYDNIEDVWRAFDALSRASIFLKRAKGGDWDLLSYAYDLMSSGVAAAEIEKKKPNWKPKWKKYQFPSYIQLLSKSKDIRDTRDEIIKKLAIHSSFNKTLNDTYPFFLIFYKKYDKRLSLNTKEKEYLNSASKS</sequence>
<accession>C3NHF4</accession>
<keyword id="KW-0067">ATP-binding</keyword>
<keyword id="KW-0235">DNA replication</keyword>
<keyword id="KW-0547">Nucleotide-binding</keyword>
<protein>
    <recommendedName>
        <fullName evidence="1">Replication factor C large subunit</fullName>
        <shortName evidence="1">RFC large subunit</shortName>
    </recommendedName>
    <alternativeName>
        <fullName evidence="1">Clamp loader large subunit</fullName>
    </alternativeName>
</protein>
<name>RFCL_SACI1</name>